<reference key="1">
    <citation type="journal article" date="2006" name="BMC Genomics">
        <title>Complete plastid genome sequence of Daucus carota: implications for biotechnology and phylogeny of angiosperms.</title>
        <authorList>
            <person name="Ruhlman T."/>
            <person name="Lee S.-B."/>
            <person name="Jansen R.K."/>
            <person name="Hostetler J.B."/>
            <person name="Tallon L.J."/>
            <person name="Town C.D."/>
            <person name="Daniell H."/>
        </authorList>
    </citation>
    <scope>NUCLEOTIDE SEQUENCE [LARGE SCALE GENOMIC DNA]</scope>
    <source>
        <strain>cv. Danvers Half-long</strain>
    </source>
</reference>
<dbReference type="EMBL" id="DQ898156">
    <property type="protein sequence ID" value="ABI32454.1"/>
    <property type="molecule type" value="Genomic_DNA"/>
</dbReference>
<dbReference type="RefSeq" id="YP_740148.1">
    <property type="nucleotide sequence ID" value="NC_008325.1"/>
</dbReference>
<dbReference type="SMR" id="Q0G9T1"/>
<dbReference type="GeneID" id="4266775"/>
<dbReference type="OMA" id="KKGMGHN"/>
<dbReference type="GO" id="GO:0009535">
    <property type="term" value="C:chloroplast thylakoid membrane"/>
    <property type="evidence" value="ECO:0007669"/>
    <property type="project" value="UniProtKB-SubCell"/>
</dbReference>
<dbReference type="GO" id="GO:0045158">
    <property type="term" value="F:electron transporter, transferring electrons within cytochrome b6/f complex of photosystem II activity"/>
    <property type="evidence" value="ECO:0007669"/>
    <property type="project" value="UniProtKB-UniRule"/>
</dbReference>
<dbReference type="GO" id="GO:0045156">
    <property type="term" value="F:electron transporter, transferring electrons within the cyclic electron transport pathway of photosynthesis activity"/>
    <property type="evidence" value="ECO:0007669"/>
    <property type="project" value="InterPro"/>
</dbReference>
<dbReference type="GO" id="GO:0016491">
    <property type="term" value="F:oxidoreductase activity"/>
    <property type="evidence" value="ECO:0007669"/>
    <property type="project" value="InterPro"/>
</dbReference>
<dbReference type="GO" id="GO:0009767">
    <property type="term" value="P:photosynthetic electron transport chain"/>
    <property type="evidence" value="ECO:0007669"/>
    <property type="project" value="InterPro"/>
</dbReference>
<dbReference type="CDD" id="cd00290">
    <property type="entry name" value="cytochrome_b_C"/>
    <property type="match status" value="1"/>
</dbReference>
<dbReference type="FunFam" id="1.10.287.980:FF:000001">
    <property type="entry name" value="Cytochrome b6-f complex subunit 4"/>
    <property type="match status" value="1"/>
</dbReference>
<dbReference type="FunFam" id="1.20.5.510:FF:000002">
    <property type="entry name" value="Cytochrome b6-f complex subunit 4"/>
    <property type="match status" value="1"/>
</dbReference>
<dbReference type="Gene3D" id="1.10.287.980">
    <property type="entry name" value="plastocyanin oxidoreductase"/>
    <property type="match status" value="1"/>
</dbReference>
<dbReference type="Gene3D" id="1.20.5.510">
    <property type="entry name" value="Single helix bin"/>
    <property type="match status" value="1"/>
</dbReference>
<dbReference type="HAMAP" id="MF_01344">
    <property type="entry name" value="Cytb6_f_subIV"/>
    <property type="match status" value="1"/>
</dbReference>
<dbReference type="InterPro" id="IPR005798">
    <property type="entry name" value="Cyt_b/b6_C"/>
</dbReference>
<dbReference type="InterPro" id="IPR036150">
    <property type="entry name" value="Cyt_b/b6_C_sf"/>
</dbReference>
<dbReference type="InterPro" id="IPR005870">
    <property type="entry name" value="Cyt_b6/f_cplx_suIV"/>
</dbReference>
<dbReference type="InterPro" id="IPR048260">
    <property type="entry name" value="Cytochrome_b_C_euk/bac"/>
</dbReference>
<dbReference type="NCBIfam" id="TIGR01156">
    <property type="entry name" value="cytb6_f_IV"/>
    <property type="match status" value="1"/>
</dbReference>
<dbReference type="PANTHER" id="PTHR19271">
    <property type="entry name" value="CYTOCHROME B"/>
    <property type="match status" value="1"/>
</dbReference>
<dbReference type="PANTHER" id="PTHR19271:SF40">
    <property type="entry name" value="CYTOCHROME B"/>
    <property type="match status" value="1"/>
</dbReference>
<dbReference type="Pfam" id="PF00032">
    <property type="entry name" value="Cytochrom_B_C"/>
    <property type="match status" value="1"/>
</dbReference>
<dbReference type="PIRSF" id="PIRSF000033">
    <property type="entry name" value="B6f_17K"/>
    <property type="match status" value="1"/>
</dbReference>
<dbReference type="SUPFAM" id="SSF81648">
    <property type="entry name" value="a domain/subunit of cytochrome bc1 complex (Ubiquinol-cytochrome c reductase)"/>
    <property type="match status" value="1"/>
</dbReference>
<dbReference type="PROSITE" id="PS51003">
    <property type="entry name" value="CYTB_CTER"/>
    <property type="match status" value="1"/>
</dbReference>
<sequence length="160" mass="17487">MGVTKKPDLNDPVLRAKLAKGMGHNYYGEPAWPNDLLYIFPVVILGTIACNVGLAVLEPSMIGEPADPFATPLEILPEWYFFPVFQILRTVPNKLLGVLLMVSVPVGLLTVPFLENVNKFQNPFRRPVATTVFLIGTAVALWLGIGATLPIDKSLTLGLF</sequence>
<keyword id="KW-0150">Chloroplast</keyword>
<keyword id="KW-0249">Electron transport</keyword>
<keyword id="KW-0472">Membrane</keyword>
<keyword id="KW-0602">Photosynthesis</keyword>
<keyword id="KW-0934">Plastid</keyword>
<keyword id="KW-0793">Thylakoid</keyword>
<keyword id="KW-0812">Transmembrane</keyword>
<keyword id="KW-1133">Transmembrane helix</keyword>
<keyword id="KW-0813">Transport</keyword>
<feature type="chain" id="PRO_0000276536" description="Cytochrome b6-f complex subunit 4">
    <location>
        <begin position="1"/>
        <end position="160"/>
    </location>
</feature>
<feature type="transmembrane region" description="Helical" evidence="2">
    <location>
        <begin position="36"/>
        <end position="56"/>
    </location>
</feature>
<feature type="transmembrane region" description="Helical" evidence="2">
    <location>
        <begin position="95"/>
        <end position="115"/>
    </location>
</feature>
<feature type="transmembrane region" description="Helical" evidence="2">
    <location>
        <begin position="131"/>
        <end position="151"/>
    </location>
</feature>
<evidence type="ECO:0000250" key="1"/>
<evidence type="ECO:0000255" key="2">
    <source>
        <dbReference type="HAMAP-Rule" id="MF_01344"/>
    </source>
</evidence>
<name>PETD_DAUCA</name>
<geneLocation type="chloroplast"/>
<comment type="function">
    <text evidence="2">Component of the cytochrome b6-f complex, which mediates electron transfer between photosystem II (PSII) and photosystem I (PSI), cyclic electron flow around PSI, and state transitions.</text>
</comment>
<comment type="subunit">
    <text evidence="1">The 4 large subunits of the cytochrome b6-f complex are cytochrome b6, subunit IV (17 kDa polypeptide, petD), cytochrome f and the Rieske protein, while the 4 small subunits are petG, petL, petM and petN. The complex functions as a dimer (By similarity).</text>
</comment>
<comment type="subcellular location">
    <subcellularLocation>
        <location evidence="2">Plastid</location>
        <location evidence="2">Chloroplast thylakoid membrane</location>
        <topology evidence="2">Multi-pass membrane protein</topology>
    </subcellularLocation>
</comment>
<comment type="similarity">
    <text evidence="2">Belongs to the cytochrome b family. PetD subfamily.</text>
</comment>
<organism>
    <name type="scientific">Daucus carota</name>
    <name type="common">Wild carrot</name>
    <dbReference type="NCBI Taxonomy" id="4039"/>
    <lineage>
        <taxon>Eukaryota</taxon>
        <taxon>Viridiplantae</taxon>
        <taxon>Streptophyta</taxon>
        <taxon>Embryophyta</taxon>
        <taxon>Tracheophyta</taxon>
        <taxon>Spermatophyta</taxon>
        <taxon>Magnoliopsida</taxon>
        <taxon>eudicotyledons</taxon>
        <taxon>Gunneridae</taxon>
        <taxon>Pentapetalae</taxon>
        <taxon>asterids</taxon>
        <taxon>campanulids</taxon>
        <taxon>Apiales</taxon>
        <taxon>Apiaceae</taxon>
        <taxon>Apioideae</taxon>
        <taxon>Scandiceae</taxon>
        <taxon>Daucinae</taxon>
        <taxon>Daucus</taxon>
        <taxon>Daucus sect. Daucus</taxon>
    </lineage>
</organism>
<proteinExistence type="inferred from homology"/>
<protein>
    <recommendedName>
        <fullName evidence="2">Cytochrome b6-f complex subunit 4</fullName>
    </recommendedName>
    <alternativeName>
        <fullName evidence="2">17 kDa polypeptide</fullName>
    </alternativeName>
</protein>
<accession>Q0G9T1</accession>
<gene>
    <name evidence="2" type="primary">petD</name>
</gene>